<accession>P73296</accession>
<feature type="chain" id="PRO_0000175545" description="Large ribosomal subunit protein bL17">
    <location>
        <begin position="1"/>
        <end position="116"/>
    </location>
</feature>
<sequence>MRHRCRVPQLGKPADQRKALLRALTTELIRHGQIKTTKARAKAVRSEVDRMITLAKDGSLAARRRALGYMYDKPTVHALFADAPSRYKDRDGGYTRIIRTLRRRGDNAEMAVIELV</sequence>
<proteinExistence type="inferred from homology"/>
<keyword id="KW-1185">Reference proteome</keyword>
<keyword id="KW-0687">Ribonucleoprotein</keyword>
<keyword id="KW-0689">Ribosomal protein</keyword>
<evidence type="ECO:0000255" key="1">
    <source>
        <dbReference type="HAMAP-Rule" id="MF_01368"/>
    </source>
</evidence>
<evidence type="ECO:0000305" key="2"/>
<gene>
    <name evidence="1" type="primary">rplQ</name>
    <name evidence="1" type="synonym">rpl17</name>
    <name type="ordered locus">sll1819</name>
</gene>
<dbReference type="EMBL" id="BA000022">
    <property type="protein sequence ID" value="BAA17324.1"/>
    <property type="molecule type" value="Genomic_DNA"/>
</dbReference>
<dbReference type="PIR" id="S77477">
    <property type="entry name" value="S77477"/>
</dbReference>
<dbReference type="SMR" id="P73296"/>
<dbReference type="FunCoup" id="P73296">
    <property type="interactions" value="401"/>
</dbReference>
<dbReference type="STRING" id="1148.gene:10498187"/>
<dbReference type="PaxDb" id="1148-1652402"/>
<dbReference type="EnsemblBacteria" id="BAA17324">
    <property type="protein sequence ID" value="BAA17324"/>
    <property type="gene ID" value="BAA17324"/>
</dbReference>
<dbReference type="KEGG" id="syn:sll1819"/>
<dbReference type="eggNOG" id="COG0203">
    <property type="taxonomic scope" value="Bacteria"/>
</dbReference>
<dbReference type="InParanoid" id="P73296"/>
<dbReference type="PhylomeDB" id="P73296"/>
<dbReference type="Proteomes" id="UP000001425">
    <property type="component" value="Chromosome"/>
</dbReference>
<dbReference type="GO" id="GO:0022625">
    <property type="term" value="C:cytosolic large ribosomal subunit"/>
    <property type="evidence" value="ECO:0000318"/>
    <property type="project" value="GO_Central"/>
</dbReference>
<dbReference type="GO" id="GO:0003735">
    <property type="term" value="F:structural constituent of ribosome"/>
    <property type="evidence" value="ECO:0000318"/>
    <property type="project" value="GO_Central"/>
</dbReference>
<dbReference type="GO" id="GO:0006412">
    <property type="term" value="P:translation"/>
    <property type="evidence" value="ECO:0007669"/>
    <property type="project" value="UniProtKB-UniRule"/>
</dbReference>
<dbReference type="FunFam" id="3.90.1030.10:FF:000001">
    <property type="entry name" value="50S ribosomal protein L17"/>
    <property type="match status" value="1"/>
</dbReference>
<dbReference type="Gene3D" id="3.90.1030.10">
    <property type="entry name" value="Ribosomal protein L17"/>
    <property type="match status" value="1"/>
</dbReference>
<dbReference type="HAMAP" id="MF_01368">
    <property type="entry name" value="Ribosomal_bL17"/>
    <property type="match status" value="1"/>
</dbReference>
<dbReference type="InterPro" id="IPR000456">
    <property type="entry name" value="Ribosomal_bL17"/>
</dbReference>
<dbReference type="InterPro" id="IPR047859">
    <property type="entry name" value="Ribosomal_bL17_CS"/>
</dbReference>
<dbReference type="InterPro" id="IPR036373">
    <property type="entry name" value="Ribosomal_bL17_sf"/>
</dbReference>
<dbReference type="NCBIfam" id="TIGR00059">
    <property type="entry name" value="L17"/>
    <property type="match status" value="1"/>
</dbReference>
<dbReference type="PANTHER" id="PTHR14413:SF16">
    <property type="entry name" value="LARGE RIBOSOMAL SUBUNIT PROTEIN BL17M"/>
    <property type="match status" value="1"/>
</dbReference>
<dbReference type="PANTHER" id="PTHR14413">
    <property type="entry name" value="RIBOSOMAL PROTEIN L17"/>
    <property type="match status" value="1"/>
</dbReference>
<dbReference type="Pfam" id="PF01196">
    <property type="entry name" value="Ribosomal_L17"/>
    <property type="match status" value="1"/>
</dbReference>
<dbReference type="SUPFAM" id="SSF64263">
    <property type="entry name" value="Prokaryotic ribosomal protein L17"/>
    <property type="match status" value="1"/>
</dbReference>
<dbReference type="PROSITE" id="PS01167">
    <property type="entry name" value="RIBOSOMAL_L17"/>
    <property type="match status" value="1"/>
</dbReference>
<organism>
    <name type="scientific">Synechocystis sp. (strain ATCC 27184 / PCC 6803 / Kazusa)</name>
    <dbReference type="NCBI Taxonomy" id="1111708"/>
    <lineage>
        <taxon>Bacteria</taxon>
        <taxon>Bacillati</taxon>
        <taxon>Cyanobacteriota</taxon>
        <taxon>Cyanophyceae</taxon>
        <taxon>Synechococcales</taxon>
        <taxon>Merismopediaceae</taxon>
        <taxon>Synechocystis</taxon>
    </lineage>
</organism>
<name>RL17_SYNY3</name>
<protein>
    <recommendedName>
        <fullName evidence="1">Large ribosomal subunit protein bL17</fullName>
    </recommendedName>
    <alternativeName>
        <fullName evidence="2">50S ribosomal protein L17</fullName>
    </alternativeName>
</protein>
<reference key="1">
    <citation type="journal article" date="1996" name="DNA Res.">
        <title>Sequence analysis of the genome of the unicellular cyanobacterium Synechocystis sp. strain PCC6803. II. Sequence determination of the entire genome and assignment of potential protein-coding regions.</title>
        <authorList>
            <person name="Kaneko T."/>
            <person name="Sato S."/>
            <person name="Kotani H."/>
            <person name="Tanaka A."/>
            <person name="Asamizu E."/>
            <person name="Nakamura Y."/>
            <person name="Miyajima N."/>
            <person name="Hirosawa M."/>
            <person name="Sugiura M."/>
            <person name="Sasamoto S."/>
            <person name="Kimura T."/>
            <person name="Hosouchi T."/>
            <person name="Matsuno A."/>
            <person name="Muraki A."/>
            <person name="Nakazaki N."/>
            <person name="Naruo K."/>
            <person name="Okumura S."/>
            <person name="Shimpo S."/>
            <person name="Takeuchi C."/>
            <person name="Wada T."/>
            <person name="Watanabe A."/>
            <person name="Yamada M."/>
            <person name="Yasuda M."/>
            <person name="Tabata S."/>
        </authorList>
    </citation>
    <scope>NUCLEOTIDE SEQUENCE [LARGE SCALE GENOMIC DNA]</scope>
    <source>
        <strain>ATCC 27184 / PCC 6803 / Kazusa</strain>
    </source>
</reference>
<comment type="subunit">
    <text evidence="1">Part of the 50S ribosomal subunit. Contacts protein L32.</text>
</comment>
<comment type="similarity">
    <text evidence="1">Belongs to the bacterial ribosomal protein bL17 family.</text>
</comment>